<comment type="function">
    <text evidence="2">Plays an essential role in sperm motility and male fertility by stabilizing the sperm flagellar axonemal structure. May be required for the stability of ODF2 and MANS1 proteins. Dispensable for the assembly and function of motile cilia.</text>
</comment>
<comment type="subunit">
    <text evidence="2">Interacts with MNS1 and ODF2.</text>
</comment>
<comment type="subcellular location">
    <subcellularLocation>
        <location evidence="1">Cytoplasm</location>
        <location evidence="1">Cytoskeleton</location>
        <location evidence="1">Cilium basal body</location>
    </subcellularLocation>
    <subcellularLocation>
        <location evidence="2">Cytoplasm</location>
        <location evidence="2">Cytoskeleton</location>
        <location evidence="2">Flagellum axoneme</location>
    </subcellularLocation>
    <text evidence="1">Localizes to a polar structure adjacent to the basal body.</text>
</comment>
<comment type="alternative products">
    <event type="alternative splicing"/>
    <isoform>
        <id>Q4R7Y8-1</id>
        <name>1</name>
        <sequence type="displayed"/>
    </isoform>
    <isoform>
        <id>Q4R7Y8-2</id>
        <name>2</name>
        <sequence type="described" ref="VSP_023956 VSP_023957"/>
    </isoform>
</comment>
<comment type="similarity">
    <text evidence="7">Belongs to the BBOF1 family.</text>
</comment>
<comment type="sequence caution" evidence="7">
    <conflict type="erroneous initiation">
        <sequence resource="EMBL-CDS" id="BAE00784"/>
    </conflict>
    <text>Truncated N-terminus.</text>
</comment>
<name>BBOF1_MACFA</name>
<proteinExistence type="evidence at transcript level"/>
<feature type="chain" id="PRO_0000252294" description="Basal body-orientation factor 1">
    <location>
        <begin position="1"/>
        <end position="529"/>
    </location>
</feature>
<feature type="region of interest" description="Disordered" evidence="5">
    <location>
        <begin position="1"/>
        <end position="22"/>
    </location>
</feature>
<feature type="region of interest" description="Disordered" evidence="5">
    <location>
        <begin position="510"/>
        <end position="529"/>
    </location>
</feature>
<feature type="coiled-coil region" evidence="4">
    <location>
        <begin position="55"/>
        <end position="198"/>
    </location>
</feature>
<feature type="coiled-coil region" evidence="4">
    <location>
        <begin position="271"/>
        <end position="361"/>
    </location>
</feature>
<feature type="compositionally biased region" description="Basic residues" evidence="5">
    <location>
        <begin position="1"/>
        <end position="13"/>
    </location>
</feature>
<feature type="splice variant" id="VSP_023956" description="In isoform 2." evidence="6">
    <original>PKIRTFDGREHSTNSVNQDLLEAEKWT</original>
    <variation>LLENFLREKTKILTQKLPVCHRNWCLP</variation>
    <location>
        <begin position="404"/>
        <end position="430"/>
    </location>
</feature>
<feature type="splice variant" id="VSP_023957" description="In isoform 2." evidence="6">
    <location>
        <begin position="431"/>
        <end position="529"/>
    </location>
</feature>
<feature type="sequence conflict" description="In Ref. 1; BAE00460." evidence="7" ref="1">
    <original>G</original>
    <variation>A</variation>
    <location>
        <position position="245"/>
    </location>
</feature>
<protein>
    <recommendedName>
        <fullName evidence="3">Basal body-orientation factor 1</fullName>
    </recommendedName>
    <alternativeName>
        <fullName>Coiled-coil domain-containing protein 176</fullName>
    </alternativeName>
</protein>
<evidence type="ECO:0000250" key="1">
    <source>
        <dbReference type="UniProtKB" id="A0JMY4"/>
    </source>
</evidence>
<evidence type="ECO:0000250" key="2">
    <source>
        <dbReference type="UniProtKB" id="Q3V079"/>
    </source>
</evidence>
<evidence type="ECO:0000250" key="3">
    <source>
        <dbReference type="UniProtKB" id="Q8ND07"/>
    </source>
</evidence>
<evidence type="ECO:0000255" key="4"/>
<evidence type="ECO:0000256" key="5">
    <source>
        <dbReference type="SAM" id="MobiDB-lite"/>
    </source>
</evidence>
<evidence type="ECO:0000303" key="6">
    <source ref="1"/>
</evidence>
<evidence type="ECO:0000305" key="7"/>
<accession>Q4R7Y8</accession>
<accession>Q4R8W1</accession>
<organism>
    <name type="scientific">Macaca fascicularis</name>
    <name type="common">Crab-eating macaque</name>
    <name type="synonym">Cynomolgus monkey</name>
    <dbReference type="NCBI Taxonomy" id="9541"/>
    <lineage>
        <taxon>Eukaryota</taxon>
        <taxon>Metazoa</taxon>
        <taxon>Chordata</taxon>
        <taxon>Craniata</taxon>
        <taxon>Vertebrata</taxon>
        <taxon>Euteleostomi</taxon>
        <taxon>Mammalia</taxon>
        <taxon>Eutheria</taxon>
        <taxon>Euarchontoglires</taxon>
        <taxon>Primates</taxon>
        <taxon>Haplorrhini</taxon>
        <taxon>Catarrhini</taxon>
        <taxon>Cercopithecidae</taxon>
        <taxon>Cercopithecinae</taxon>
        <taxon>Macaca</taxon>
    </lineage>
</organism>
<gene>
    <name evidence="3" type="primary">BBOF1</name>
    <name type="synonym">CCDC176</name>
    <name type="ORF">QtsA-11302</name>
</gene>
<keyword id="KW-0025">Alternative splicing</keyword>
<keyword id="KW-0966">Cell projection</keyword>
<keyword id="KW-0969">Cilium</keyword>
<keyword id="KW-0175">Coiled coil</keyword>
<keyword id="KW-0963">Cytoplasm</keyword>
<keyword id="KW-0206">Cytoskeleton</keyword>
<keyword id="KW-0282">Flagellum</keyword>
<keyword id="KW-1185">Reference proteome</keyword>
<dbReference type="EMBL" id="AB168336">
    <property type="protein sequence ID" value="BAE00460.1"/>
    <property type="molecule type" value="mRNA"/>
</dbReference>
<dbReference type="EMBL" id="AB168673">
    <property type="protein sequence ID" value="BAE00784.1"/>
    <property type="status" value="ALT_INIT"/>
    <property type="molecule type" value="mRNA"/>
</dbReference>
<dbReference type="RefSeq" id="NP_001270683.1">
    <property type="nucleotide sequence ID" value="NM_001283754.1"/>
</dbReference>
<dbReference type="SMR" id="Q4R7Y8"/>
<dbReference type="eggNOG" id="ENOG502QRCW">
    <property type="taxonomic scope" value="Eukaryota"/>
</dbReference>
<dbReference type="Proteomes" id="UP000233100">
    <property type="component" value="Unplaced"/>
</dbReference>
<dbReference type="GO" id="GO:0005930">
    <property type="term" value="C:axoneme"/>
    <property type="evidence" value="ECO:0000250"/>
    <property type="project" value="UniProtKB"/>
</dbReference>
<dbReference type="GO" id="GO:0036064">
    <property type="term" value="C:ciliary basal body"/>
    <property type="evidence" value="ECO:0000250"/>
    <property type="project" value="UniProtKB"/>
</dbReference>
<dbReference type="GO" id="GO:0036126">
    <property type="term" value="C:sperm flagellum"/>
    <property type="evidence" value="ECO:0000250"/>
    <property type="project" value="UniProtKB"/>
</dbReference>
<dbReference type="GO" id="GO:0030317">
    <property type="term" value="P:flagellated sperm motility"/>
    <property type="evidence" value="ECO:0000250"/>
    <property type="project" value="UniProtKB"/>
</dbReference>
<dbReference type="GO" id="GO:0044458">
    <property type="term" value="P:motile cilium assembly"/>
    <property type="evidence" value="ECO:0000250"/>
    <property type="project" value="UniProtKB"/>
</dbReference>
<dbReference type="GO" id="GO:0007288">
    <property type="term" value="P:sperm axoneme assembly"/>
    <property type="evidence" value="ECO:0000250"/>
    <property type="project" value="UniProtKB"/>
</dbReference>
<dbReference type="InterPro" id="IPR032777">
    <property type="entry name" value="DUF4515"/>
</dbReference>
<dbReference type="PANTHER" id="PTHR14845:SF5">
    <property type="entry name" value="BASAL BODY-ORIENTATION FACTOR 1"/>
    <property type="match status" value="1"/>
</dbReference>
<dbReference type="PANTHER" id="PTHR14845">
    <property type="entry name" value="COILED-COIL DOMAIN-CONTAINING 166"/>
    <property type="match status" value="1"/>
</dbReference>
<dbReference type="Pfam" id="PF14988">
    <property type="entry name" value="DUF4515"/>
    <property type="match status" value="1"/>
</dbReference>
<sequence>MPSKGKDKKKGKSRGKDTKKLIKTDESVVDRAKANASLWEARLEITELSRIEYRDTSRTLAKSNEDLKKKQCKMEKDIMSVLSYLKKQDQEKDNMIEKLKQQLNETKEKAQEEKDKLEQKYTRQIDELEGQFHQKAKEIGMIHTELKAVRQFQRRKIQVERELDDLKENLRNTERIHQETLRRLESRFFEEKHRLKQEAEKKIIMLAERAHHEAVVQLNDAGRNVFKENVYLQKALAYHLKEAGGLQKNSQKLQESHALLLHQKEINDLLIKEKIMQLVQQRSQIQTLQKKVVNLETALGYMTKEFESEVLKLQQHAMIENQAGQVEIDKLQHLLQMKDREMNRVKKLAKNILDERTEVERFFLDALHQVKQQILISRKHYKQIAQAAFNLKMRAACAGRTEYPKIRTFDGREHSTNSVNQDLLEAEKWTHIEGNVDIGDLTWEQKEKVLRLLFAKMNGCPSRKYNQSSKPPVPDYVVSDSGETKEFGDESKLQDKIFITQQIPISDSSGKVVLPTIPKGPQESDTGTF</sequence>
<reference key="1">
    <citation type="submission" date="2005-06" db="EMBL/GenBank/DDBJ databases">
        <title>DNA sequences of macaque genes expressed in brain or testis and its evolutionary implications.</title>
        <authorList>
            <consortium name="International consortium for macaque cDNA sequencing and analysis"/>
        </authorList>
    </citation>
    <scope>NUCLEOTIDE SEQUENCE [LARGE SCALE MRNA] (ISOFORM 2)</scope>
    <scope>NUCLEOTIDE SEQUENCE [LARGE SCALE MRNA] OF 202-529 (ISOFORM 1)</scope>
    <source>
        <tissue>Testis</tissue>
    </source>
</reference>